<protein>
    <recommendedName>
        <fullName evidence="1">Small ribosomal subunit protein uS11</fullName>
    </recommendedName>
    <alternativeName>
        <fullName evidence="3">30S ribosomal protein S11</fullName>
    </alternativeName>
</protein>
<name>RS11_MYCTO</name>
<proteinExistence type="inferred from homology"/>
<gene>
    <name evidence="1" type="primary">rpsK</name>
    <name type="ordered locus">MT3566</name>
</gene>
<accession>P9WH64</accession>
<accession>L0TFH0</accession>
<accession>O06326</accession>
<evidence type="ECO:0000255" key="1">
    <source>
        <dbReference type="HAMAP-Rule" id="MF_01310"/>
    </source>
</evidence>
<evidence type="ECO:0000256" key="2">
    <source>
        <dbReference type="SAM" id="MobiDB-lite"/>
    </source>
</evidence>
<evidence type="ECO:0000305" key="3"/>
<feature type="chain" id="PRO_0000428241" description="Small ribosomal subunit protein uS11">
    <location>
        <begin position="1"/>
        <end position="139"/>
    </location>
</feature>
<feature type="region of interest" description="Disordered" evidence="2">
    <location>
        <begin position="1"/>
        <end position="33"/>
    </location>
</feature>
<feature type="region of interest" description="Disordered" evidence="2">
    <location>
        <begin position="118"/>
        <end position="139"/>
    </location>
</feature>
<feature type="compositionally biased region" description="Basic residues" evidence="2">
    <location>
        <begin position="14"/>
        <end position="23"/>
    </location>
</feature>
<reference key="1">
    <citation type="journal article" date="2002" name="J. Bacteriol.">
        <title>Whole-genome comparison of Mycobacterium tuberculosis clinical and laboratory strains.</title>
        <authorList>
            <person name="Fleischmann R.D."/>
            <person name="Alland D."/>
            <person name="Eisen J.A."/>
            <person name="Carpenter L."/>
            <person name="White O."/>
            <person name="Peterson J.D."/>
            <person name="DeBoy R.T."/>
            <person name="Dodson R.J."/>
            <person name="Gwinn M.L."/>
            <person name="Haft D.H."/>
            <person name="Hickey E.K."/>
            <person name="Kolonay J.F."/>
            <person name="Nelson W.C."/>
            <person name="Umayam L.A."/>
            <person name="Ermolaeva M.D."/>
            <person name="Salzberg S.L."/>
            <person name="Delcher A."/>
            <person name="Utterback T.R."/>
            <person name="Weidman J.F."/>
            <person name="Khouri H.M."/>
            <person name="Gill J."/>
            <person name="Mikula A."/>
            <person name="Bishai W."/>
            <person name="Jacobs W.R. Jr."/>
            <person name="Venter J.C."/>
            <person name="Fraser C.M."/>
        </authorList>
    </citation>
    <scope>NUCLEOTIDE SEQUENCE [LARGE SCALE GENOMIC DNA]</scope>
    <source>
        <strain>CDC 1551 / Oshkosh</strain>
    </source>
</reference>
<sequence length="139" mass="14785">MPPAKKGPATSARKGQKTRRREKKNVPHGAAHIKSTFNNTIVTITDPQGNVIAWASSGHVGFKGSRKSTPFAAQLAAENAARKAQDHGVRKVDVFVKGPGSGRETAIRSLQAAGLEVGAISDVTPQPHNGVRPPKRRRV</sequence>
<comment type="function">
    <text evidence="1">Located on the platform of the 30S subunit, it bridges several disparate RNA helices of the 16S rRNA. Forms part of the Shine-Dalgarno cleft in the 70S ribosome.</text>
</comment>
<comment type="subunit">
    <text evidence="1">Part of the 30S ribosomal subunit. Interacts with proteins S7 and S18. Binds to IF-3.</text>
</comment>
<comment type="similarity">
    <text evidence="1">Belongs to the universal ribosomal protein uS11 family.</text>
</comment>
<keyword id="KW-1185">Reference proteome</keyword>
<keyword id="KW-0687">Ribonucleoprotein</keyword>
<keyword id="KW-0689">Ribosomal protein</keyword>
<keyword id="KW-0694">RNA-binding</keyword>
<keyword id="KW-0699">rRNA-binding</keyword>
<organism>
    <name type="scientific">Mycobacterium tuberculosis (strain CDC 1551 / Oshkosh)</name>
    <dbReference type="NCBI Taxonomy" id="83331"/>
    <lineage>
        <taxon>Bacteria</taxon>
        <taxon>Bacillati</taxon>
        <taxon>Actinomycetota</taxon>
        <taxon>Actinomycetes</taxon>
        <taxon>Mycobacteriales</taxon>
        <taxon>Mycobacteriaceae</taxon>
        <taxon>Mycobacterium</taxon>
        <taxon>Mycobacterium tuberculosis complex</taxon>
    </lineage>
</organism>
<dbReference type="EMBL" id="AE000516">
    <property type="protein sequence ID" value="AAK47905.1"/>
    <property type="molecule type" value="Genomic_DNA"/>
</dbReference>
<dbReference type="PIR" id="H70565">
    <property type="entry name" value="H70565"/>
</dbReference>
<dbReference type="RefSeq" id="WP_003900064.1">
    <property type="nucleotide sequence ID" value="NZ_KK341227.1"/>
</dbReference>
<dbReference type="SMR" id="P9WH64"/>
<dbReference type="GeneID" id="45427448"/>
<dbReference type="KEGG" id="mtc:MT3566"/>
<dbReference type="PATRIC" id="fig|83331.31.peg.3823"/>
<dbReference type="HOGENOM" id="CLU_072439_5_0_11"/>
<dbReference type="Proteomes" id="UP000001020">
    <property type="component" value="Chromosome"/>
</dbReference>
<dbReference type="GO" id="GO:1990904">
    <property type="term" value="C:ribonucleoprotein complex"/>
    <property type="evidence" value="ECO:0007669"/>
    <property type="project" value="UniProtKB-KW"/>
</dbReference>
<dbReference type="GO" id="GO:0005840">
    <property type="term" value="C:ribosome"/>
    <property type="evidence" value="ECO:0007669"/>
    <property type="project" value="UniProtKB-KW"/>
</dbReference>
<dbReference type="GO" id="GO:0019843">
    <property type="term" value="F:rRNA binding"/>
    <property type="evidence" value="ECO:0007669"/>
    <property type="project" value="UniProtKB-UniRule"/>
</dbReference>
<dbReference type="GO" id="GO:0003735">
    <property type="term" value="F:structural constituent of ribosome"/>
    <property type="evidence" value="ECO:0007669"/>
    <property type="project" value="InterPro"/>
</dbReference>
<dbReference type="GO" id="GO:0006412">
    <property type="term" value="P:translation"/>
    <property type="evidence" value="ECO:0007669"/>
    <property type="project" value="UniProtKB-UniRule"/>
</dbReference>
<dbReference type="FunFam" id="3.30.420.80:FF:000001">
    <property type="entry name" value="30S ribosomal protein S11"/>
    <property type="match status" value="1"/>
</dbReference>
<dbReference type="Gene3D" id="3.30.420.80">
    <property type="entry name" value="Ribosomal protein S11"/>
    <property type="match status" value="1"/>
</dbReference>
<dbReference type="HAMAP" id="MF_01310">
    <property type="entry name" value="Ribosomal_uS11"/>
    <property type="match status" value="1"/>
</dbReference>
<dbReference type="InterPro" id="IPR001971">
    <property type="entry name" value="Ribosomal_uS11"/>
</dbReference>
<dbReference type="InterPro" id="IPR019981">
    <property type="entry name" value="Ribosomal_uS11_bac-type"/>
</dbReference>
<dbReference type="InterPro" id="IPR018102">
    <property type="entry name" value="Ribosomal_uS11_CS"/>
</dbReference>
<dbReference type="InterPro" id="IPR036967">
    <property type="entry name" value="Ribosomal_uS11_sf"/>
</dbReference>
<dbReference type="NCBIfam" id="NF003698">
    <property type="entry name" value="PRK05309.1"/>
    <property type="match status" value="1"/>
</dbReference>
<dbReference type="NCBIfam" id="TIGR03632">
    <property type="entry name" value="uS11_bact"/>
    <property type="match status" value="1"/>
</dbReference>
<dbReference type="PANTHER" id="PTHR11759">
    <property type="entry name" value="40S RIBOSOMAL PROTEIN S14/30S RIBOSOMAL PROTEIN S11"/>
    <property type="match status" value="1"/>
</dbReference>
<dbReference type="Pfam" id="PF00411">
    <property type="entry name" value="Ribosomal_S11"/>
    <property type="match status" value="1"/>
</dbReference>
<dbReference type="PIRSF" id="PIRSF002131">
    <property type="entry name" value="Ribosomal_S11"/>
    <property type="match status" value="1"/>
</dbReference>
<dbReference type="SUPFAM" id="SSF53137">
    <property type="entry name" value="Translational machinery components"/>
    <property type="match status" value="1"/>
</dbReference>
<dbReference type="PROSITE" id="PS00054">
    <property type="entry name" value="RIBOSOMAL_S11"/>
    <property type="match status" value="1"/>
</dbReference>